<comment type="function">
    <text evidence="1">Plant defense peptide. Has antifungal activity.</text>
</comment>
<comment type="subcellular location">
    <subcellularLocation>
        <location evidence="3">Secreted</location>
    </subcellularLocation>
</comment>
<comment type="similarity">
    <text evidence="4">Belongs to the DEFL family.</text>
</comment>
<gene>
    <name evidence="5" type="primary">Def2</name>
</gene>
<evidence type="ECO:0000250" key="1">
    <source>
        <dbReference type="UniProtKB" id="A4L7R7"/>
    </source>
</evidence>
<evidence type="ECO:0000250" key="2">
    <source>
        <dbReference type="UniProtKB" id="P32026"/>
    </source>
</evidence>
<evidence type="ECO:0000250" key="3">
    <source>
        <dbReference type="UniProtKB" id="Q43413"/>
    </source>
</evidence>
<evidence type="ECO:0000255" key="4"/>
<evidence type="ECO:0000312" key="5">
    <source>
        <dbReference type="EMBL" id="ABO61349.1"/>
    </source>
</evidence>
<evidence type="ECO:0007829" key="6">
    <source>
        <dbReference type="PDB" id="7LNS"/>
    </source>
</evidence>
<sequence length="83" mass="8963">MAGKGVGTPLSALFLLVLLVVTIGMMEVQVAEGRMCKTPSAKFKGYCVSSTNCKNVCRTEGFPTGSCDFHITSRKCYCYKPCP</sequence>
<feature type="signal peptide" evidence="4">
    <location>
        <begin position="1"/>
        <end position="33"/>
    </location>
</feature>
<feature type="chain" id="PRO_0000392922" description="Defensin-2">
    <location>
        <begin position="34"/>
        <end position="83"/>
    </location>
</feature>
<feature type="disulfide bond" evidence="2">
    <location>
        <begin position="36"/>
        <end position="82"/>
    </location>
</feature>
<feature type="disulfide bond" evidence="2">
    <location>
        <begin position="47"/>
        <end position="67"/>
    </location>
</feature>
<feature type="disulfide bond" evidence="2">
    <location>
        <begin position="53"/>
        <end position="76"/>
    </location>
</feature>
<feature type="disulfide bond" evidence="2">
    <location>
        <begin position="57"/>
        <end position="78"/>
    </location>
</feature>
<feature type="strand" evidence="6">
    <location>
        <begin position="35"/>
        <end position="39"/>
    </location>
</feature>
<feature type="helix" evidence="6">
    <location>
        <begin position="50"/>
        <end position="60"/>
    </location>
</feature>
<feature type="strand" evidence="6">
    <location>
        <begin position="63"/>
        <end position="67"/>
    </location>
</feature>
<feature type="strand" evidence="6">
    <location>
        <begin position="71"/>
        <end position="74"/>
    </location>
</feature>
<feature type="strand" evidence="6">
    <location>
        <begin position="76"/>
        <end position="81"/>
    </location>
</feature>
<keyword id="KW-0002">3D-structure</keyword>
<keyword id="KW-0929">Antimicrobial</keyword>
<keyword id="KW-0211">Defensin</keyword>
<keyword id="KW-1015">Disulfide bond</keyword>
<keyword id="KW-0295">Fungicide</keyword>
<keyword id="KW-0964">Secreted</keyword>
<keyword id="KW-0732">Signal</keyword>
<organism>
    <name type="scientific">Pinus sylvestris</name>
    <name type="common">Scotch pine</name>
    <dbReference type="NCBI Taxonomy" id="3349"/>
    <lineage>
        <taxon>Eukaryota</taxon>
        <taxon>Viridiplantae</taxon>
        <taxon>Streptophyta</taxon>
        <taxon>Embryophyta</taxon>
        <taxon>Tracheophyta</taxon>
        <taxon>Spermatophyta</taxon>
        <taxon>Pinopsida</taxon>
        <taxon>Pinidae</taxon>
        <taxon>Conifers I</taxon>
        <taxon>Pinales</taxon>
        <taxon>Pinaceae</taxon>
        <taxon>Pinus</taxon>
        <taxon>Pinus subgen. Pinus</taxon>
    </lineage>
</organism>
<reference evidence="5" key="1">
    <citation type="journal article" date="2008" name="Cyt. Genet.">
        <title>Molecular cloning and characterization of Scotch pine Defensin-2.</title>
        <authorList>
            <person name="Koval'ova V.A."/>
            <person name="Hut R.T."/>
        </authorList>
    </citation>
    <scope>NUCLEOTIDE SEQUENCE [MRNA]</scope>
    <source>
        <tissue evidence="5">Root</tissue>
    </source>
</reference>
<protein>
    <recommendedName>
        <fullName>Defensin-2</fullName>
    </recommendedName>
</protein>
<proteinExistence type="evidence at protein level"/>
<name>DEF2_PINSY</name>
<accession>A4L7R8</accession>
<dbReference type="EMBL" id="EF455617">
    <property type="protein sequence ID" value="ABO61349.1"/>
    <property type="molecule type" value="mRNA"/>
</dbReference>
<dbReference type="PDB" id="7LNS">
    <property type="method" value="NMR"/>
    <property type="chains" value="A=34-83"/>
</dbReference>
<dbReference type="PDBsum" id="7LNS"/>
<dbReference type="SMR" id="A4L7R8"/>
<dbReference type="GO" id="GO:0005576">
    <property type="term" value="C:extracellular region"/>
    <property type="evidence" value="ECO:0000250"/>
    <property type="project" value="UniProtKB"/>
</dbReference>
<dbReference type="GO" id="GO:0050832">
    <property type="term" value="P:defense response to fungus"/>
    <property type="evidence" value="ECO:0000250"/>
    <property type="project" value="UniProtKB"/>
</dbReference>
<dbReference type="GO" id="GO:0031640">
    <property type="term" value="P:killing of cells of another organism"/>
    <property type="evidence" value="ECO:0007669"/>
    <property type="project" value="UniProtKB-KW"/>
</dbReference>
<dbReference type="CDD" id="cd00107">
    <property type="entry name" value="Knot1"/>
    <property type="match status" value="1"/>
</dbReference>
<dbReference type="FunFam" id="3.30.30.10:FF:000004">
    <property type="entry name" value="Defensin-like protein CAL1"/>
    <property type="match status" value="1"/>
</dbReference>
<dbReference type="Gene3D" id="3.30.30.10">
    <property type="entry name" value="Knottin, scorpion toxin-like"/>
    <property type="match status" value="1"/>
</dbReference>
<dbReference type="InterPro" id="IPR008176">
    <property type="entry name" value="Defensin_plant"/>
</dbReference>
<dbReference type="InterPro" id="IPR003614">
    <property type="entry name" value="Scorpion_toxin-like"/>
</dbReference>
<dbReference type="InterPro" id="IPR036574">
    <property type="entry name" value="Scorpion_toxin-like_sf"/>
</dbReference>
<dbReference type="PANTHER" id="PTHR33147">
    <property type="entry name" value="DEFENSIN-LIKE PROTEIN 1"/>
    <property type="match status" value="1"/>
</dbReference>
<dbReference type="PANTHER" id="PTHR33147:SF8">
    <property type="entry name" value="DEFENSIN-LIKE PROTEIN CAL1"/>
    <property type="match status" value="1"/>
</dbReference>
<dbReference type="Pfam" id="PF00304">
    <property type="entry name" value="Gamma-thionin"/>
    <property type="match status" value="1"/>
</dbReference>
<dbReference type="PRINTS" id="PR00288">
    <property type="entry name" value="PUROTHIONIN"/>
</dbReference>
<dbReference type="SMART" id="SM00505">
    <property type="entry name" value="Knot1"/>
    <property type="match status" value="1"/>
</dbReference>
<dbReference type="SUPFAM" id="SSF57095">
    <property type="entry name" value="Scorpion toxin-like"/>
    <property type="match status" value="1"/>
</dbReference>
<dbReference type="PROSITE" id="PS00940">
    <property type="entry name" value="GAMMA_THIONIN"/>
    <property type="match status" value="1"/>
</dbReference>